<name>RPOC_SHIF8</name>
<accession>Q0SY12</accession>
<gene>
    <name evidence="1" type="primary">rpoC</name>
    <name type="ordered locus">SFV_4060</name>
</gene>
<keyword id="KW-0007">Acetylation</keyword>
<keyword id="KW-0240">DNA-directed RNA polymerase</keyword>
<keyword id="KW-0460">Magnesium</keyword>
<keyword id="KW-0479">Metal-binding</keyword>
<keyword id="KW-0548">Nucleotidyltransferase</keyword>
<keyword id="KW-0804">Transcription</keyword>
<keyword id="KW-0808">Transferase</keyword>
<keyword id="KW-0862">Zinc</keyword>
<dbReference type="EC" id="2.7.7.6" evidence="1"/>
<dbReference type="EMBL" id="CP000266">
    <property type="protein sequence ID" value="ABF06053.1"/>
    <property type="molecule type" value="Genomic_DNA"/>
</dbReference>
<dbReference type="RefSeq" id="WP_000653955.1">
    <property type="nucleotide sequence ID" value="NC_008258.1"/>
</dbReference>
<dbReference type="SMR" id="Q0SY12"/>
<dbReference type="KEGG" id="sfv:SFV_4060"/>
<dbReference type="HOGENOM" id="CLU_000524_3_1_6"/>
<dbReference type="Proteomes" id="UP000000659">
    <property type="component" value="Chromosome"/>
</dbReference>
<dbReference type="GO" id="GO:0000428">
    <property type="term" value="C:DNA-directed RNA polymerase complex"/>
    <property type="evidence" value="ECO:0007669"/>
    <property type="project" value="UniProtKB-KW"/>
</dbReference>
<dbReference type="GO" id="GO:0003677">
    <property type="term" value="F:DNA binding"/>
    <property type="evidence" value="ECO:0007669"/>
    <property type="project" value="UniProtKB-UniRule"/>
</dbReference>
<dbReference type="GO" id="GO:0003899">
    <property type="term" value="F:DNA-directed RNA polymerase activity"/>
    <property type="evidence" value="ECO:0007669"/>
    <property type="project" value="UniProtKB-UniRule"/>
</dbReference>
<dbReference type="GO" id="GO:0000287">
    <property type="term" value="F:magnesium ion binding"/>
    <property type="evidence" value="ECO:0007669"/>
    <property type="project" value="UniProtKB-UniRule"/>
</dbReference>
<dbReference type="GO" id="GO:0008270">
    <property type="term" value="F:zinc ion binding"/>
    <property type="evidence" value="ECO:0007669"/>
    <property type="project" value="UniProtKB-UniRule"/>
</dbReference>
<dbReference type="GO" id="GO:0006351">
    <property type="term" value="P:DNA-templated transcription"/>
    <property type="evidence" value="ECO:0007669"/>
    <property type="project" value="UniProtKB-UniRule"/>
</dbReference>
<dbReference type="CDD" id="cd02655">
    <property type="entry name" value="RNAP_beta'_C"/>
    <property type="match status" value="1"/>
</dbReference>
<dbReference type="CDD" id="cd01609">
    <property type="entry name" value="RNAP_beta'_N"/>
    <property type="match status" value="1"/>
</dbReference>
<dbReference type="FunFam" id="1.10.132.30:FF:000003">
    <property type="entry name" value="DNA-directed RNA polymerase subunit beta"/>
    <property type="match status" value="1"/>
</dbReference>
<dbReference type="FunFam" id="1.10.150.390:FF:000002">
    <property type="entry name" value="DNA-directed RNA polymerase subunit beta"/>
    <property type="match status" value="1"/>
</dbReference>
<dbReference type="FunFam" id="1.10.274.100:FF:000002">
    <property type="entry name" value="DNA-directed RNA polymerase subunit beta"/>
    <property type="match status" value="1"/>
</dbReference>
<dbReference type="FunFam" id="1.10.40.90:FF:000001">
    <property type="entry name" value="DNA-directed RNA polymerase subunit beta"/>
    <property type="match status" value="1"/>
</dbReference>
<dbReference type="FunFam" id="2.40.50.100:FF:000012">
    <property type="entry name" value="DNA-directed RNA polymerase subunit beta"/>
    <property type="match status" value="1"/>
</dbReference>
<dbReference type="FunFam" id="2.40.50.100:FF:000016">
    <property type="entry name" value="DNA-directed RNA polymerase subunit beta"/>
    <property type="match status" value="1"/>
</dbReference>
<dbReference type="FunFam" id="2.40.50.100:FF:000019">
    <property type="entry name" value="DNA-directed RNA polymerase subunit beta"/>
    <property type="match status" value="1"/>
</dbReference>
<dbReference type="FunFam" id="4.10.860.120:FF:000001">
    <property type="entry name" value="DNA-directed RNA polymerase subunit beta"/>
    <property type="match status" value="1"/>
</dbReference>
<dbReference type="Gene3D" id="1.10.132.30">
    <property type="match status" value="1"/>
</dbReference>
<dbReference type="Gene3D" id="1.10.150.390">
    <property type="match status" value="1"/>
</dbReference>
<dbReference type="Gene3D" id="1.10.1790.20">
    <property type="match status" value="1"/>
</dbReference>
<dbReference type="Gene3D" id="1.10.40.90">
    <property type="match status" value="1"/>
</dbReference>
<dbReference type="Gene3D" id="2.40.40.20">
    <property type="match status" value="1"/>
</dbReference>
<dbReference type="Gene3D" id="2.40.50.100">
    <property type="match status" value="3"/>
</dbReference>
<dbReference type="Gene3D" id="4.10.860.120">
    <property type="entry name" value="RNA polymerase II, clamp domain"/>
    <property type="match status" value="1"/>
</dbReference>
<dbReference type="Gene3D" id="1.10.274.100">
    <property type="entry name" value="RNA polymerase Rpb1, domain 3"/>
    <property type="match status" value="1"/>
</dbReference>
<dbReference type="HAMAP" id="MF_01322">
    <property type="entry name" value="RNApol_bact_RpoC"/>
    <property type="match status" value="1"/>
</dbReference>
<dbReference type="InterPro" id="IPR045867">
    <property type="entry name" value="DNA-dir_RpoC_beta_prime"/>
</dbReference>
<dbReference type="InterPro" id="IPR012754">
    <property type="entry name" value="DNA-dir_RpoC_beta_prime_bact"/>
</dbReference>
<dbReference type="InterPro" id="IPR000722">
    <property type="entry name" value="RNA_pol_asu"/>
</dbReference>
<dbReference type="InterPro" id="IPR006592">
    <property type="entry name" value="RNA_pol_N"/>
</dbReference>
<dbReference type="InterPro" id="IPR007080">
    <property type="entry name" value="RNA_pol_Rpb1_1"/>
</dbReference>
<dbReference type="InterPro" id="IPR007066">
    <property type="entry name" value="RNA_pol_Rpb1_3"/>
</dbReference>
<dbReference type="InterPro" id="IPR042102">
    <property type="entry name" value="RNA_pol_Rpb1_3_sf"/>
</dbReference>
<dbReference type="InterPro" id="IPR007083">
    <property type="entry name" value="RNA_pol_Rpb1_4"/>
</dbReference>
<dbReference type="InterPro" id="IPR007081">
    <property type="entry name" value="RNA_pol_Rpb1_5"/>
</dbReference>
<dbReference type="InterPro" id="IPR044893">
    <property type="entry name" value="RNA_pol_Rpb1_clamp_domain"/>
</dbReference>
<dbReference type="InterPro" id="IPR038120">
    <property type="entry name" value="Rpb1_funnel_sf"/>
</dbReference>
<dbReference type="NCBIfam" id="TIGR02386">
    <property type="entry name" value="rpoC_TIGR"/>
    <property type="match status" value="1"/>
</dbReference>
<dbReference type="PANTHER" id="PTHR19376">
    <property type="entry name" value="DNA-DIRECTED RNA POLYMERASE"/>
    <property type="match status" value="1"/>
</dbReference>
<dbReference type="PANTHER" id="PTHR19376:SF54">
    <property type="entry name" value="DNA-DIRECTED RNA POLYMERASE SUBUNIT BETA"/>
    <property type="match status" value="1"/>
</dbReference>
<dbReference type="Pfam" id="PF04997">
    <property type="entry name" value="RNA_pol_Rpb1_1"/>
    <property type="match status" value="1"/>
</dbReference>
<dbReference type="Pfam" id="PF00623">
    <property type="entry name" value="RNA_pol_Rpb1_2"/>
    <property type="match status" value="2"/>
</dbReference>
<dbReference type="Pfam" id="PF04983">
    <property type="entry name" value="RNA_pol_Rpb1_3"/>
    <property type="match status" value="1"/>
</dbReference>
<dbReference type="Pfam" id="PF05000">
    <property type="entry name" value="RNA_pol_Rpb1_4"/>
    <property type="match status" value="1"/>
</dbReference>
<dbReference type="Pfam" id="PF04998">
    <property type="entry name" value="RNA_pol_Rpb1_5"/>
    <property type="match status" value="1"/>
</dbReference>
<dbReference type="SMART" id="SM00663">
    <property type="entry name" value="RPOLA_N"/>
    <property type="match status" value="1"/>
</dbReference>
<dbReference type="SUPFAM" id="SSF64484">
    <property type="entry name" value="beta and beta-prime subunits of DNA dependent RNA-polymerase"/>
    <property type="match status" value="1"/>
</dbReference>
<organism>
    <name type="scientific">Shigella flexneri serotype 5b (strain 8401)</name>
    <dbReference type="NCBI Taxonomy" id="373384"/>
    <lineage>
        <taxon>Bacteria</taxon>
        <taxon>Pseudomonadati</taxon>
        <taxon>Pseudomonadota</taxon>
        <taxon>Gammaproteobacteria</taxon>
        <taxon>Enterobacterales</taxon>
        <taxon>Enterobacteriaceae</taxon>
        <taxon>Shigella</taxon>
    </lineage>
</organism>
<reference key="1">
    <citation type="journal article" date="2006" name="BMC Genomics">
        <title>Complete genome sequence of Shigella flexneri 5b and comparison with Shigella flexneri 2a.</title>
        <authorList>
            <person name="Nie H."/>
            <person name="Yang F."/>
            <person name="Zhang X."/>
            <person name="Yang J."/>
            <person name="Chen L."/>
            <person name="Wang J."/>
            <person name="Xiong Z."/>
            <person name="Peng J."/>
            <person name="Sun L."/>
            <person name="Dong J."/>
            <person name="Xue Y."/>
            <person name="Xu X."/>
            <person name="Chen S."/>
            <person name="Yao Z."/>
            <person name="Shen Y."/>
            <person name="Jin Q."/>
        </authorList>
    </citation>
    <scope>NUCLEOTIDE SEQUENCE [LARGE SCALE GENOMIC DNA]</scope>
    <source>
        <strain>8401</strain>
    </source>
</reference>
<comment type="function">
    <text evidence="1">DNA-dependent RNA polymerase catalyzes the transcription of DNA into RNA using the four ribonucleoside triphosphates as substrates.</text>
</comment>
<comment type="catalytic activity">
    <reaction evidence="1">
        <text>RNA(n) + a ribonucleoside 5'-triphosphate = RNA(n+1) + diphosphate</text>
        <dbReference type="Rhea" id="RHEA:21248"/>
        <dbReference type="Rhea" id="RHEA-COMP:14527"/>
        <dbReference type="Rhea" id="RHEA-COMP:17342"/>
        <dbReference type="ChEBI" id="CHEBI:33019"/>
        <dbReference type="ChEBI" id="CHEBI:61557"/>
        <dbReference type="ChEBI" id="CHEBI:140395"/>
        <dbReference type="EC" id="2.7.7.6"/>
    </reaction>
</comment>
<comment type="cofactor">
    <cofactor evidence="1">
        <name>Mg(2+)</name>
        <dbReference type="ChEBI" id="CHEBI:18420"/>
    </cofactor>
    <text evidence="1">Binds 1 Mg(2+) ion per subunit.</text>
</comment>
<comment type="cofactor">
    <cofactor evidence="1">
        <name>Zn(2+)</name>
        <dbReference type="ChEBI" id="CHEBI:29105"/>
    </cofactor>
    <text evidence="1">Binds 2 Zn(2+) ions per subunit.</text>
</comment>
<comment type="subunit">
    <text evidence="1">The RNAP catalytic core consists of 2 alpha, 1 beta, 1 beta' and 1 omega subunit. When a sigma factor is associated with the core the holoenzyme is formed, which can initiate transcription.</text>
</comment>
<comment type="similarity">
    <text evidence="1">Belongs to the RNA polymerase beta' chain family.</text>
</comment>
<evidence type="ECO:0000255" key="1">
    <source>
        <dbReference type="HAMAP-Rule" id="MF_01322"/>
    </source>
</evidence>
<proteinExistence type="inferred from homology"/>
<protein>
    <recommendedName>
        <fullName evidence="1">DNA-directed RNA polymerase subunit beta'</fullName>
        <shortName evidence="1">RNAP subunit beta'</shortName>
        <ecNumber evidence="1">2.7.7.6</ecNumber>
    </recommendedName>
    <alternativeName>
        <fullName evidence="1">RNA polymerase subunit beta'</fullName>
    </alternativeName>
    <alternativeName>
        <fullName evidence="1">Transcriptase subunit beta'</fullName>
    </alternativeName>
</protein>
<sequence>MKDLLKFLKAQTKTEEFDAIKIALASPDMIRSWSFGEVKKPETINYRTFKPERDGLFCARIFGPVKDYECLCGKYKRLKHRGVICEKCGVEVTQTKVRRERMGHIELASPTAHIWFLKSLPSRIGLLLDMPLRDIERVLYFESYVVIEGGMTNLERQQILTEEQYLDALEEFGDEFDAKMGAEAIQALLKSMDLEQECEQLREELNETNSETKRKKLTKRIKLLEAFVQSGNKPEWMILTVLPVLPPDLRPLVPLDGGRFATSDLNDLYRRVINRNNRLKRLLDLAAPDIIVRNEKRMLQEAVDALLDNGRRGRAITGSNKRPLKSLADMIKGKQGRFRQNLLGKRVDYSGRSVITVGPYLRLHQCGLPKKMALELFKPFIYGKLELRGLATTIKAAKKMVEREEAVVWDILDEVIREHPVLLNRAPTLHRLGIQAFEPVLIEGKAIQLHPLVCAAYNADFDGDQMAVHVPLTLEAQLEARALMMSTNNILSPANGEPIIVPSQDVVLGLYYMTRDCVNAKGEGMVLTGPKEAERLYRTGLASLHARVKVRITEYEKDANGELVAKTSLKDTTVGRAILWMIVPKGLPYSIVNQALGKKAISKMLNTCYRILGLKPTVIFADQIMYTGFAYAARSGASVGIDDMVIPEKKHEIISEAEAEVAEIQEQFQSGLVTAGERYNKVIDIWAAANDRVSKAMMDNLQTETVINRDGQEEKQVSFNSIYMMADSGARGSAAQIRQLAGMRGLMAKPDGSIIETPITANFREGLNVLQYFISTHGARKGLADTALKTANSGYLTRRLVDVAQDLVVTEDDCGTHEGIMMTPVIEGGDVKEPLRDRVLGRVTAEDVLKPGTADILVPRNTLLHEQWCDLLEENSVDAVKVRSVVSCDTDFGVCAHCYGRDLARGHIINKGEAIGVIAAQSIGEPGTQLTMRTFHIGGAASRAAAESSIQVKNKGSIKLSNVKSVVNSSGKLVITSRNTELKLIDEFGRTKESYKVPYGAVLAKGDGEQVAGGETVANWDPHTMPVITEVSGFVRFTDMIDGQTITRQTDELTGLSSLVVLDSAERTAGGKDLRPALKIVDAQGNDVLIPGTDMPAQYFLPGKAIVQLEDGVQISSGDTLARIPQESGGTKDITGGLPRVADLFEARRPKEPAILAEISGIVSFGKETKGKRRLVITPVDGSDPYEEMIPKWRQLNVFEGERVERGDVISDGPEAPHDILRLRGVHAVTRYIVNEVQDVYRLQGVKINDKHIEVIVRQMLRKATIVNAGSSDFLEGEQVEYSRVKIANRELEANGKVGATYSRDLLGITKASLATESFISAASFQETTRVLTEAAVAGKRDELRGLKENVIVGRLIPAGTGYAYHQDRMRRRAAGEAPAAPQVTAEDASASLAELLNAGLGGSDNE</sequence>
<feature type="chain" id="PRO_0000353435" description="DNA-directed RNA polymerase subunit beta'">
    <location>
        <begin position="1"/>
        <end position="1407"/>
    </location>
</feature>
<feature type="binding site" evidence="1">
    <location>
        <position position="70"/>
    </location>
    <ligand>
        <name>Zn(2+)</name>
        <dbReference type="ChEBI" id="CHEBI:29105"/>
        <label>1</label>
    </ligand>
</feature>
<feature type="binding site" evidence="1">
    <location>
        <position position="72"/>
    </location>
    <ligand>
        <name>Zn(2+)</name>
        <dbReference type="ChEBI" id="CHEBI:29105"/>
        <label>1</label>
    </ligand>
</feature>
<feature type="binding site" evidence="1">
    <location>
        <position position="85"/>
    </location>
    <ligand>
        <name>Zn(2+)</name>
        <dbReference type="ChEBI" id="CHEBI:29105"/>
        <label>1</label>
    </ligand>
</feature>
<feature type="binding site" evidence="1">
    <location>
        <position position="88"/>
    </location>
    <ligand>
        <name>Zn(2+)</name>
        <dbReference type="ChEBI" id="CHEBI:29105"/>
        <label>1</label>
    </ligand>
</feature>
<feature type="binding site" evidence="1">
    <location>
        <position position="460"/>
    </location>
    <ligand>
        <name>Mg(2+)</name>
        <dbReference type="ChEBI" id="CHEBI:18420"/>
    </ligand>
</feature>
<feature type="binding site" evidence="1">
    <location>
        <position position="462"/>
    </location>
    <ligand>
        <name>Mg(2+)</name>
        <dbReference type="ChEBI" id="CHEBI:18420"/>
    </ligand>
</feature>
<feature type="binding site" evidence="1">
    <location>
        <position position="464"/>
    </location>
    <ligand>
        <name>Mg(2+)</name>
        <dbReference type="ChEBI" id="CHEBI:18420"/>
    </ligand>
</feature>
<feature type="binding site" evidence="1">
    <location>
        <position position="814"/>
    </location>
    <ligand>
        <name>Zn(2+)</name>
        <dbReference type="ChEBI" id="CHEBI:29105"/>
        <label>2</label>
    </ligand>
</feature>
<feature type="binding site" evidence="1">
    <location>
        <position position="888"/>
    </location>
    <ligand>
        <name>Zn(2+)</name>
        <dbReference type="ChEBI" id="CHEBI:29105"/>
        <label>2</label>
    </ligand>
</feature>
<feature type="binding site" evidence="1">
    <location>
        <position position="895"/>
    </location>
    <ligand>
        <name>Zn(2+)</name>
        <dbReference type="ChEBI" id="CHEBI:29105"/>
        <label>2</label>
    </ligand>
</feature>
<feature type="binding site" evidence="1">
    <location>
        <position position="898"/>
    </location>
    <ligand>
        <name>Zn(2+)</name>
        <dbReference type="ChEBI" id="CHEBI:29105"/>
        <label>2</label>
    </ligand>
</feature>
<feature type="modified residue" description="N6-acetyllysine" evidence="1">
    <location>
        <position position="972"/>
    </location>
</feature>